<gene>
    <name evidence="1" type="primary">yohJ</name>
    <name type="ordered locus">SeSA_A2420</name>
</gene>
<proteinExistence type="inferred from homology"/>
<sequence>MSKSLNIIWQYIRAFVLIYACLYAGIFLASLLPITIPGSIIGMLILFVLLALQILPAKWVNPGCYVLIRYMALLFVPIGVGVMQYFDLLRAQFGPVVVSCAISTLVVFVVVSWSSHLIHGERKVVGQKGTKK</sequence>
<keyword id="KW-0997">Cell inner membrane</keyword>
<keyword id="KW-1003">Cell membrane</keyword>
<keyword id="KW-0472">Membrane</keyword>
<keyword id="KW-0812">Transmembrane</keyword>
<keyword id="KW-1133">Transmembrane helix</keyword>
<organism>
    <name type="scientific">Salmonella schwarzengrund (strain CVM19633)</name>
    <dbReference type="NCBI Taxonomy" id="439843"/>
    <lineage>
        <taxon>Bacteria</taxon>
        <taxon>Pseudomonadati</taxon>
        <taxon>Pseudomonadota</taxon>
        <taxon>Gammaproteobacteria</taxon>
        <taxon>Enterobacterales</taxon>
        <taxon>Enterobacteriaceae</taxon>
        <taxon>Salmonella</taxon>
    </lineage>
</organism>
<reference key="1">
    <citation type="journal article" date="2011" name="J. Bacteriol.">
        <title>Comparative genomics of 28 Salmonella enterica isolates: evidence for CRISPR-mediated adaptive sublineage evolution.</title>
        <authorList>
            <person name="Fricke W.F."/>
            <person name="Mammel M.K."/>
            <person name="McDermott P.F."/>
            <person name="Tartera C."/>
            <person name="White D.G."/>
            <person name="Leclerc J.E."/>
            <person name="Ravel J."/>
            <person name="Cebula T.A."/>
        </authorList>
    </citation>
    <scope>NUCLEOTIDE SEQUENCE [LARGE SCALE GENOMIC DNA]</scope>
    <source>
        <strain>CVM19633</strain>
    </source>
</reference>
<feature type="chain" id="PRO_1000137374" description="UPF0299 membrane protein YohJ">
    <location>
        <begin position="1"/>
        <end position="132"/>
    </location>
</feature>
<feature type="transmembrane region" description="Helical" evidence="1">
    <location>
        <begin position="7"/>
        <end position="27"/>
    </location>
</feature>
<feature type="transmembrane region" description="Helical" evidence="1">
    <location>
        <begin position="31"/>
        <end position="51"/>
    </location>
</feature>
<feature type="transmembrane region" description="Helical" evidence="1">
    <location>
        <begin position="63"/>
        <end position="83"/>
    </location>
</feature>
<feature type="transmembrane region" description="Helical" evidence="1">
    <location>
        <begin position="93"/>
        <end position="113"/>
    </location>
</feature>
<comment type="subcellular location">
    <subcellularLocation>
        <location evidence="1">Cell inner membrane</location>
        <topology evidence="1">Multi-pass membrane protein</topology>
    </subcellularLocation>
</comment>
<comment type="similarity">
    <text evidence="1">Belongs to the UPF0299 family.</text>
</comment>
<name>YOHJ_SALSV</name>
<protein>
    <recommendedName>
        <fullName evidence="1">UPF0299 membrane protein YohJ</fullName>
    </recommendedName>
</protein>
<evidence type="ECO:0000255" key="1">
    <source>
        <dbReference type="HAMAP-Rule" id="MF_01144"/>
    </source>
</evidence>
<accession>B4TNN8</accession>
<dbReference type="EMBL" id="CP001127">
    <property type="protein sequence ID" value="ACF89197.1"/>
    <property type="molecule type" value="Genomic_DNA"/>
</dbReference>
<dbReference type="RefSeq" id="WP_000045719.1">
    <property type="nucleotide sequence ID" value="NC_011094.1"/>
</dbReference>
<dbReference type="SMR" id="B4TNN8"/>
<dbReference type="KEGG" id="sew:SeSA_A2420"/>
<dbReference type="HOGENOM" id="CLU_113736_1_1_6"/>
<dbReference type="Proteomes" id="UP000001865">
    <property type="component" value="Chromosome"/>
</dbReference>
<dbReference type="GO" id="GO:0005886">
    <property type="term" value="C:plasma membrane"/>
    <property type="evidence" value="ECO:0007669"/>
    <property type="project" value="UniProtKB-SubCell"/>
</dbReference>
<dbReference type="HAMAP" id="MF_01144">
    <property type="entry name" value="UPF0299"/>
    <property type="match status" value="1"/>
</dbReference>
<dbReference type="InterPro" id="IPR005538">
    <property type="entry name" value="LrgA/CidA"/>
</dbReference>
<dbReference type="InterPro" id="IPR022957">
    <property type="entry name" value="Uncharacterised_UPF0299"/>
</dbReference>
<dbReference type="NCBIfam" id="NF002494">
    <property type="entry name" value="PRK01821.1"/>
    <property type="match status" value="1"/>
</dbReference>
<dbReference type="PANTHER" id="PTHR33931">
    <property type="entry name" value="HOLIN-LIKE PROTEIN CIDA-RELATED"/>
    <property type="match status" value="1"/>
</dbReference>
<dbReference type="PANTHER" id="PTHR33931:SF5">
    <property type="entry name" value="UPF0299 MEMBRANE PROTEIN YOHJ"/>
    <property type="match status" value="1"/>
</dbReference>
<dbReference type="Pfam" id="PF03788">
    <property type="entry name" value="LrgA"/>
    <property type="match status" value="1"/>
</dbReference>